<accession>Q92GY2</accession>
<feature type="chain" id="PRO_0000131330" description="Large ribosomal subunit protein uL18">
    <location>
        <begin position="1"/>
        <end position="118"/>
    </location>
</feature>
<evidence type="ECO:0000255" key="1">
    <source>
        <dbReference type="HAMAP-Rule" id="MF_01337"/>
    </source>
</evidence>
<evidence type="ECO:0000305" key="2"/>
<proteinExistence type="inferred from homology"/>
<gene>
    <name evidence="1" type="primary">rplR</name>
    <name type="ordered locus">RC0990</name>
</gene>
<protein>
    <recommendedName>
        <fullName evidence="1">Large ribosomal subunit protein uL18</fullName>
    </recommendedName>
    <alternativeName>
        <fullName evidence="2">50S ribosomal protein L18</fullName>
    </alternativeName>
</protein>
<keyword id="KW-0687">Ribonucleoprotein</keyword>
<keyword id="KW-0689">Ribosomal protein</keyword>
<keyword id="KW-0694">RNA-binding</keyword>
<keyword id="KW-0699">rRNA-binding</keyword>
<comment type="function">
    <text evidence="1">This is one of the proteins that bind and probably mediate the attachment of the 5S RNA into the large ribosomal subunit, where it forms part of the central protuberance.</text>
</comment>
<comment type="subunit">
    <text evidence="1">Part of the 50S ribosomal subunit; part of the 5S rRNA/L5/L18/L25 subcomplex. Contacts the 5S and 23S rRNAs.</text>
</comment>
<comment type="similarity">
    <text evidence="1">Belongs to the universal ribosomal protein uL18 family.</text>
</comment>
<reference key="1">
    <citation type="journal article" date="2001" name="Science">
        <title>Mechanisms of evolution in Rickettsia conorii and R. prowazekii.</title>
        <authorList>
            <person name="Ogata H."/>
            <person name="Audic S."/>
            <person name="Renesto-Audiffren P."/>
            <person name="Fournier P.-E."/>
            <person name="Barbe V."/>
            <person name="Samson D."/>
            <person name="Roux V."/>
            <person name="Cossart P."/>
            <person name="Weissenbach J."/>
            <person name="Claverie J.-M."/>
            <person name="Raoult D."/>
        </authorList>
    </citation>
    <scope>NUCLEOTIDE SEQUENCE [LARGE SCALE GENOMIC DNA]</scope>
    <source>
        <strain>ATCC VR-613 / Malish 7</strain>
    </source>
</reference>
<name>RL18_RICCN</name>
<sequence>MRSAKLKFEKRRSRIRHKISKTSNRVRLSIFKSGRHIYAQIIDDSKSITIAAASTLDEKIKKLKKSHCNIENAIKVGEEIAKKADSAGIKDVVFDRGGYKYHGVVKALADAAREKIKF</sequence>
<dbReference type="EMBL" id="AE006914">
    <property type="protein sequence ID" value="AAL03528.1"/>
    <property type="molecule type" value="Genomic_DNA"/>
</dbReference>
<dbReference type="PIR" id="F97823">
    <property type="entry name" value="F97823"/>
</dbReference>
<dbReference type="RefSeq" id="WP_004997824.1">
    <property type="nucleotide sequence ID" value="NC_003103.1"/>
</dbReference>
<dbReference type="SMR" id="Q92GY2"/>
<dbReference type="GeneID" id="95361470"/>
<dbReference type="KEGG" id="rco:RC0990"/>
<dbReference type="HOGENOM" id="CLU_098841_0_1_5"/>
<dbReference type="Proteomes" id="UP000000816">
    <property type="component" value="Chromosome"/>
</dbReference>
<dbReference type="GO" id="GO:0022625">
    <property type="term" value="C:cytosolic large ribosomal subunit"/>
    <property type="evidence" value="ECO:0007669"/>
    <property type="project" value="TreeGrafter"/>
</dbReference>
<dbReference type="GO" id="GO:0008097">
    <property type="term" value="F:5S rRNA binding"/>
    <property type="evidence" value="ECO:0007669"/>
    <property type="project" value="TreeGrafter"/>
</dbReference>
<dbReference type="GO" id="GO:0003735">
    <property type="term" value="F:structural constituent of ribosome"/>
    <property type="evidence" value="ECO:0007669"/>
    <property type="project" value="InterPro"/>
</dbReference>
<dbReference type="GO" id="GO:0006412">
    <property type="term" value="P:translation"/>
    <property type="evidence" value="ECO:0007669"/>
    <property type="project" value="UniProtKB-UniRule"/>
</dbReference>
<dbReference type="CDD" id="cd00432">
    <property type="entry name" value="Ribosomal_L18_L5e"/>
    <property type="match status" value="1"/>
</dbReference>
<dbReference type="FunFam" id="3.30.420.100:FF:000001">
    <property type="entry name" value="50S ribosomal protein L18"/>
    <property type="match status" value="1"/>
</dbReference>
<dbReference type="Gene3D" id="3.30.420.100">
    <property type="match status" value="1"/>
</dbReference>
<dbReference type="HAMAP" id="MF_01337_B">
    <property type="entry name" value="Ribosomal_uL18_B"/>
    <property type="match status" value="1"/>
</dbReference>
<dbReference type="InterPro" id="IPR004389">
    <property type="entry name" value="Ribosomal_uL18_bac-type"/>
</dbReference>
<dbReference type="InterPro" id="IPR005484">
    <property type="entry name" value="Ribosomal_uL18_bac/euk"/>
</dbReference>
<dbReference type="NCBIfam" id="TIGR00060">
    <property type="entry name" value="L18_bact"/>
    <property type="match status" value="1"/>
</dbReference>
<dbReference type="PANTHER" id="PTHR12899">
    <property type="entry name" value="39S RIBOSOMAL PROTEIN L18, MITOCHONDRIAL"/>
    <property type="match status" value="1"/>
</dbReference>
<dbReference type="PANTHER" id="PTHR12899:SF3">
    <property type="entry name" value="LARGE RIBOSOMAL SUBUNIT PROTEIN UL18M"/>
    <property type="match status" value="1"/>
</dbReference>
<dbReference type="Pfam" id="PF00861">
    <property type="entry name" value="Ribosomal_L18p"/>
    <property type="match status" value="1"/>
</dbReference>
<dbReference type="SUPFAM" id="SSF53137">
    <property type="entry name" value="Translational machinery components"/>
    <property type="match status" value="1"/>
</dbReference>
<organism>
    <name type="scientific">Rickettsia conorii (strain ATCC VR-613 / Malish 7)</name>
    <dbReference type="NCBI Taxonomy" id="272944"/>
    <lineage>
        <taxon>Bacteria</taxon>
        <taxon>Pseudomonadati</taxon>
        <taxon>Pseudomonadota</taxon>
        <taxon>Alphaproteobacteria</taxon>
        <taxon>Rickettsiales</taxon>
        <taxon>Rickettsiaceae</taxon>
        <taxon>Rickettsieae</taxon>
        <taxon>Rickettsia</taxon>
        <taxon>spotted fever group</taxon>
    </lineage>
</organism>